<comment type="function">
    <text evidence="1">Produces ATP from ADP in the presence of a proton gradient across the membrane. The gamma chain is believed to be important in regulating ATPase activity and the flow of protons through the CF(0) complex.</text>
</comment>
<comment type="subunit">
    <text evidence="1">F-type ATPases have 2 components, CF(1) - the catalytic core - and CF(0) - the membrane proton channel. CF(1) has five subunits: alpha(3), beta(3), gamma(1), delta(1), epsilon(1). CF(0) has three main subunits: a, b and c.</text>
</comment>
<comment type="subcellular location">
    <subcellularLocation>
        <location evidence="1">Cell membrane</location>
        <topology evidence="1">Peripheral membrane protein</topology>
    </subcellularLocation>
</comment>
<comment type="similarity">
    <text evidence="1">Belongs to the ATPase gamma chain family.</text>
</comment>
<keyword id="KW-0066">ATP synthesis</keyword>
<keyword id="KW-1003">Cell membrane</keyword>
<keyword id="KW-0139">CF(1)</keyword>
<keyword id="KW-0375">Hydrogen ion transport</keyword>
<keyword id="KW-0406">Ion transport</keyword>
<keyword id="KW-0472">Membrane</keyword>
<keyword id="KW-1185">Reference proteome</keyword>
<keyword id="KW-0813">Transport</keyword>
<feature type="chain" id="PRO_1000083792" description="ATP synthase gamma chain">
    <location>
        <begin position="1"/>
        <end position="302"/>
    </location>
</feature>
<dbReference type="EMBL" id="CP000750">
    <property type="protein sequence ID" value="ABS02757.1"/>
    <property type="molecule type" value="Genomic_DNA"/>
</dbReference>
<dbReference type="RefSeq" id="WP_012084387.1">
    <property type="nucleotide sequence ID" value="NC_009664.2"/>
</dbReference>
<dbReference type="SMR" id="A6W7G8"/>
<dbReference type="STRING" id="266940.Krad_1269"/>
<dbReference type="KEGG" id="kra:Krad_1269"/>
<dbReference type="eggNOG" id="COG0224">
    <property type="taxonomic scope" value="Bacteria"/>
</dbReference>
<dbReference type="HOGENOM" id="CLU_050669_0_0_11"/>
<dbReference type="OrthoDB" id="9812769at2"/>
<dbReference type="Proteomes" id="UP000001116">
    <property type="component" value="Chromosome"/>
</dbReference>
<dbReference type="GO" id="GO:0005886">
    <property type="term" value="C:plasma membrane"/>
    <property type="evidence" value="ECO:0007669"/>
    <property type="project" value="UniProtKB-SubCell"/>
</dbReference>
<dbReference type="GO" id="GO:0045259">
    <property type="term" value="C:proton-transporting ATP synthase complex"/>
    <property type="evidence" value="ECO:0007669"/>
    <property type="project" value="UniProtKB-KW"/>
</dbReference>
<dbReference type="GO" id="GO:0005524">
    <property type="term" value="F:ATP binding"/>
    <property type="evidence" value="ECO:0007669"/>
    <property type="project" value="UniProtKB-UniRule"/>
</dbReference>
<dbReference type="GO" id="GO:0046933">
    <property type="term" value="F:proton-transporting ATP synthase activity, rotational mechanism"/>
    <property type="evidence" value="ECO:0007669"/>
    <property type="project" value="UniProtKB-UniRule"/>
</dbReference>
<dbReference type="GO" id="GO:0042777">
    <property type="term" value="P:proton motive force-driven plasma membrane ATP synthesis"/>
    <property type="evidence" value="ECO:0007669"/>
    <property type="project" value="UniProtKB-UniRule"/>
</dbReference>
<dbReference type="CDD" id="cd12151">
    <property type="entry name" value="F1-ATPase_gamma"/>
    <property type="match status" value="1"/>
</dbReference>
<dbReference type="Gene3D" id="3.40.1380.10">
    <property type="match status" value="1"/>
</dbReference>
<dbReference type="Gene3D" id="1.10.287.80">
    <property type="entry name" value="ATP synthase, gamma subunit, helix hairpin domain"/>
    <property type="match status" value="1"/>
</dbReference>
<dbReference type="HAMAP" id="MF_00815">
    <property type="entry name" value="ATP_synth_gamma_bact"/>
    <property type="match status" value="1"/>
</dbReference>
<dbReference type="InterPro" id="IPR035968">
    <property type="entry name" value="ATP_synth_F1_ATPase_gsu"/>
</dbReference>
<dbReference type="InterPro" id="IPR000131">
    <property type="entry name" value="ATP_synth_F1_gsu"/>
</dbReference>
<dbReference type="InterPro" id="IPR023632">
    <property type="entry name" value="ATP_synth_F1_gsu_CS"/>
</dbReference>
<dbReference type="NCBIfam" id="TIGR01146">
    <property type="entry name" value="ATPsyn_F1gamma"/>
    <property type="match status" value="1"/>
</dbReference>
<dbReference type="NCBIfam" id="NF004145">
    <property type="entry name" value="PRK05621.1-2"/>
    <property type="match status" value="1"/>
</dbReference>
<dbReference type="PANTHER" id="PTHR11693">
    <property type="entry name" value="ATP SYNTHASE GAMMA CHAIN"/>
    <property type="match status" value="1"/>
</dbReference>
<dbReference type="PANTHER" id="PTHR11693:SF22">
    <property type="entry name" value="ATP SYNTHASE SUBUNIT GAMMA, MITOCHONDRIAL"/>
    <property type="match status" value="1"/>
</dbReference>
<dbReference type="Pfam" id="PF00231">
    <property type="entry name" value="ATP-synt"/>
    <property type="match status" value="1"/>
</dbReference>
<dbReference type="PRINTS" id="PR00126">
    <property type="entry name" value="ATPASEGAMMA"/>
</dbReference>
<dbReference type="SUPFAM" id="SSF52943">
    <property type="entry name" value="ATP synthase (F1-ATPase), gamma subunit"/>
    <property type="match status" value="1"/>
</dbReference>
<dbReference type="PROSITE" id="PS00153">
    <property type="entry name" value="ATPASE_GAMMA"/>
    <property type="match status" value="1"/>
</dbReference>
<sequence>MAGQLRAYRRQIRSVQATKKITRAMELIAASRIIKAQANVRASTPYARALTRAVSAAASNSSLDHPLITEKTEVKRAAVLLCSSDRGLAGAYSSSVLREGERLTATLRAEGKEIAPYLVGRKAAAFYNFRRRAVVDQWAGFTDSPSYEDAKTIGDRLVADFGKEFADGGVDEIHVVYTHFVSMVTQEPRVIRLLPLEVVEGVEAPSDGELQPLYEFEPSADAVLDALLPQYVNSRIYNCLLQAAASELAARQRAMKSATDNADELIKKLTRLANNARQADITQEISEIVGGADALASSGSRA</sequence>
<name>ATPG_KINRD</name>
<accession>A6W7G8</accession>
<evidence type="ECO:0000255" key="1">
    <source>
        <dbReference type="HAMAP-Rule" id="MF_00815"/>
    </source>
</evidence>
<gene>
    <name evidence="1" type="primary">atpG</name>
    <name type="ordered locus">Krad_1269</name>
</gene>
<organism>
    <name type="scientific">Kineococcus radiotolerans (strain ATCC BAA-149 / DSM 14245 / SRS30216)</name>
    <dbReference type="NCBI Taxonomy" id="266940"/>
    <lineage>
        <taxon>Bacteria</taxon>
        <taxon>Bacillati</taxon>
        <taxon>Actinomycetota</taxon>
        <taxon>Actinomycetes</taxon>
        <taxon>Kineosporiales</taxon>
        <taxon>Kineosporiaceae</taxon>
        <taxon>Kineococcus</taxon>
    </lineage>
</organism>
<reference key="1">
    <citation type="journal article" date="2008" name="PLoS ONE">
        <title>Survival in nuclear waste, extreme resistance, and potential applications gleaned from the genome sequence of Kineococcus radiotolerans SRS30216.</title>
        <authorList>
            <person name="Bagwell C.E."/>
            <person name="Bhat S."/>
            <person name="Hawkins G.M."/>
            <person name="Smith B.W."/>
            <person name="Biswas T."/>
            <person name="Hoover T.R."/>
            <person name="Saunders E."/>
            <person name="Han C.S."/>
            <person name="Tsodikov O.V."/>
            <person name="Shimkets L.J."/>
        </authorList>
    </citation>
    <scope>NUCLEOTIDE SEQUENCE [LARGE SCALE GENOMIC DNA]</scope>
    <source>
        <strain>ATCC BAA-149 / DSM 14245 / SRS30216</strain>
    </source>
</reference>
<protein>
    <recommendedName>
        <fullName evidence="1">ATP synthase gamma chain</fullName>
    </recommendedName>
    <alternativeName>
        <fullName evidence="1">ATP synthase F1 sector gamma subunit</fullName>
    </alternativeName>
    <alternativeName>
        <fullName evidence="1">F-ATPase gamma subunit</fullName>
    </alternativeName>
</protein>
<proteinExistence type="inferred from homology"/>